<dbReference type="EC" id="2.1.3.15" evidence="1"/>
<dbReference type="EMBL" id="FM252032">
    <property type="protein sequence ID" value="CAZ56527.1"/>
    <property type="molecule type" value="Genomic_DNA"/>
</dbReference>
<dbReference type="RefSeq" id="WP_012028463.1">
    <property type="nucleotide sequence ID" value="NC_012926.1"/>
</dbReference>
<dbReference type="RefSeq" id="YP_003029367.1">
    <property type="nucleotide sequence ID" value="NC_012926.1"/>
</dbReference>
<dbReference type="SMR" id="C6GWM7"/>
<dbReference type="GeneID" id="8154761"/>
<dbReference type="KEGG" id="ssb:SSUBM407_1671"/>
<dbReference type="PATRIC" id="fig|568814.3.peg.1707"/>
<dbReference type="HOGENOM" id="CLU_015486_1_1_9"/>
<dbReference type="UniPathway" id="UPA00655">
    <property type="reaction ID" value="UER00711"/>
</dbReference>
<dbReference type="Proteomes" id="UP000009077">
    <property type="component" value="Chromosome"/>
</dbReference>
<dbReference type="GO" id="GO:0009317">
    <property type="term" value="C:acetyl-CoA carboxylase complex"/>
    <property type="evidence" value="ECO:0007669"/>
    <property type="project" value="InterPro"/>
</dbReference>
<dbReference type="GO" id="GO:0003989">
    <property type="term" value="F:acetyl-CoA carboxylase activity"/>
    <property type="evidence" value="ECO:0007669"/>
    <property type="project" value="InterPro"/>
</dbReference>
<dbReference type="GO" id="GO:0005524">
    <property type="term" value="F:ATP binding"/>
    <property type="evidence" value="ECO:0007669"/>
    <property type="project" value="UniProtKB-KW"/>
</dbReference>
<dbReference type="GO" id="GO:0016743">
    <property type="term" value="F:carboxyl- or carbamoyltransferase activity"/>
    <property type="evidence" value="ECO:0007669"/>
    <property type="project" value="UniProtKB-UniRule"/>
</dbReference>
<dbReference type="GO" id="GO:0008270">
    <property type="term" value="F:zinc ion binding"/>
    <property type="evidence" value="ECO:0007669"/>
    <property type="project" value="UniProtKB-UniRule"/>
</dbReference>
<dbReference type="GO" id="GO:0006633">
    <property type="term" value="P:fatty acid biosynthetic process"/>
    <property type="evidence" value="ECO:0007669"/>
    <property type="project" value="UniProtKB-KW"/>
</dbReference>
<dbReference type="GO" id="GO:2001295">
    <property type="term" value="P:malonyl-CoA biosynthetic process"/>
    <property type="evidence" value="ECO:0007669"/>
    <property type="project" value="UniProtKB-UniRule"/>
</dbReference>
<dbReference type="Gene3D" id="3.90.226.10">
    <property type="entry name" value="2-enoyl-CoA Hydratase, Chain A, domain 1"/>
    <property type="match status" value="1"/>
</dbReference>
<dbReference type="HAMAP" id="MF_01395">
    <property type="entry name" value="AcetylCoA_CT_beta"/>
    <property type="match status" value="1"/>
</dbReference>
<dbReference type="InterPro" id="IPR034733">
    <property type="entry name" value="AcCoA_carboxyl_beta"/>
</dbReference>
<dbReference type="InterPro" id="IPR000438">
    <property type="entry name" value="Acetyl_CoA_COase_Trfase_b_su"/>
</dbReference>
<dbReference type="InterPro" id="IPR029045">
    <property type="entry name" value="ClpP/crotonase-like_dom_sf"/>
</dbReference>
<dbReference type="InterPro" id="IPR011762">
    <property type="entry name" value="COA_CT_N"/>
</dbReference>
<dbReference type="NCBIfam" id="TIGR00515">
    <property type="entry name" value="accD"/>
    <property type="match status" value="1"/>
</dbReference>
<dbReference type="PANTHER" id="PTHR42995">
    <property type="entry name" value="ACETYL-COENZYME A CARBOXYLASE CARBOXYL TRANSFERASE SUBUNIT BETA, CHLOROPLASTIC"/>
    <property type="match status" value="1"/>
</dbReference>
<dbReference type="PANTHER" id="PTHR42995:SF5">
    <property type="entry name" value="ACETYL-COENZYME A CARBOXYLASE CARBOXYL TRANSFERASE SUBUNIT BETA, CHLOROPLASTIC"/>
    <property type="match status" value="1"/>
</dbReference>
<dbReference type="Pfam" id="PF01039">
    <property type="entry name" value="Carboxyl_trans"/>
    <property type="match status" value="1"/>
</dbReference>
<dbReference type="PRINTS" id="PR01070">
    <property type="entry name" value="ACCCTRFRASEB"/>
</dbReference>
<dbReference type="SUPFAM" id="SSF52096">
    <property type="entry name" value="ClpP/crotonase"/>
    <property type="match status" value="1"/>
</dbReference>
<dbReference type="PROSITE" id="PS50980">
    <property type="entry name" value="COA_CT_NTER"/>
    <property type="match status" value="1"/>
</dbReference>
<organism>
    <name type="scientific">Streptococcus suis (strain BM407)</name>
    <dbReference type="NCBI Taxonomy" id="568814"/>
    <lineage>
        <taxon>Bacteria</taxon>
        <taxon>Bacillati</taxon>
        <taxon>Bacillota</taxon>
        <taxon>Bacilli</taxon>
        <taxon>Lactobacillales</taxon>
        <taxon>Streptococcaceae</taxon>
        <taxon>Streptococcus</taxon>
    </lineage>
</organism>
<evidence type="ECO:0000255" key="1">
    <source>
        <dbReference type="HAMAP-Rule" id="MF_01395"/>
    </source>
</evidence>
<evidence type="ECO:0000255" key="2">
    <source>
        <dbReference type="PROSITE-ProRule" id="PRU01136"/>
    </source>
</evidence>
<reference key="1">
    <citation type="journal article" date="2009" name="PLoS ONE">
        <title>Rapid evolution of virulence and drug resistance in the emerging zoonotic pathogen Streptococcus suis.</title>
        <authorList>
            <person name="Holden M.T.G."/>
            <person name="Hauser H."/>
            <person name="Sanders M."/>
            <person name="Ngo T.H."/>
            <person name="Cherevach I."/>
            <person name="Cronin A."/>
            <person name="Goodhead I."/>
            <person name="Mungall K."/>
            <person name="Quail M.A."/>
            <person name="Price C."/>
            <person name="Rabbinowitsch E."/>
            <person name="Sharp S."/>
            <person name="Croucher N.J."/>
            <person name="Chieu T.B."/>
            <person name="Mai N.T.H."/>
            <person name="Diep T.S."/>
            <person name="Chinh N.T."/>
            <person name="Kehoe M."/>
            <person name="Leigh J.A."/>
            <person name="Ward P.N."/>
            <person name="Dowson C.G."/>
            <person name="Whatmore A.M."/>
            <person name="Chanter N."/>
            <person name="Iversen P."/>
            <person name="Gottschalk M."/>
            <person name="Slater J.D."/>
            <person name="Smith H.E."/>
            <person name="Spratt B.G."/>
            <person name="Xu J."/>
            <person name="Ye C."/>
            <person name="Bentley S."/>
            <person name="Barrell B.G."/>
            <person name="Schultsz C."/>
            <person name="Maskell D.J."/>
            <person name="Parkhill J."/>
        </authorList>
    </citation>
    <scope>NUCLEOTIDE SEQUENCE [LARGE SCALE GENOMIC DNA]</scope>
    <source>
        <strain>BM407</strain>
    </source>
</reference>
<gene>
    <name evidence="1" type="primary">accD</name>
    <name type="ordered locus">SSUBM407_1671</name>
</gene>
<sequence>MALFRKKDKYIRINPNRSRIESAPQAKPEVPDELFSKCPACKVILYKNDLGLEKTCQHCSYNFRITAQERRALTVDEGSFEELFTGIETTNPLDFPNYLEKLAATRQKTGLDEAVLTGKATIGGQPVALGIMDSHFIMASMGTVVGEKITRLFELAIEERLPVVLFTASGGARMQEGIMSLMQMAKISAAVKRHSNAGLFYLTVLTDPTTGGVTASFAMEGDIILAEPQTLVGFAGRRVIESTVRENLPDDFQKAEFLQEHGFVDAIVKRQDLPATISRLLRMHGGVR</sequence>
<protein>
    <recommendedName>
        <fullName evidence="1">Acetyl-coenzyme A carboxylase carboxyl transferase subunit beta</fullName>
        <shortName evidence="1">ACCase subunit beta</shortName>
        <shortName evidence="1">Acetyl-CoA carboxylase carboxyltransferase subunit beta</shortName>
        <ecNumber evidence="1">2.1.3.15</ecNumber>
    </recommendedName>
</protein>
<accession>C6GWM7</accession>
<proteinExistence type="inferred from homology"/>
<name>ACCD_STRS4</name>
<comment type="function">
    <text evidence="1">Component of the acetyl coenzyme A carboxylase (ACC) complex. Biotin carboxylase (BC) catalyzes the carboxylation of biotin on its carrier protein (BCCP) and then the CO(2) group is transferred by the transcarboxylase to acetyl-CoA to form malonyl-CoA.</text>
</comment>
<comment type="catalytic activity">
    <reaction evidence="1">
        <text>N(6)-carboxybiotinyl-L-lysyl-[protein] + acetyl-CoA = N(6)-biotinyl-L-lysyl-[protein] + malonyl-CoA</text>
        <dbReference type="Rhea" id="RHEA:54728"/>
        <dbReference type="Rhea" id="RHEA-COMP:10505"/>
        <dbReference type="Rhea" id="RHEA-COMP:10506"/>
        <dbReference type="ChEBI" id="CHEBI:57288"/>
        <dbReference type="ChEBI" id="CHEBI:57384"/>
        <dbReference type="ChEBI" id="CHEBI:83144"/>
        <dbReference type="ChEBI" id="CHEBI:83145"/>
        <dbReference type="EC" id="2.1.3.15"/>
    </reaction>
</comment>
<comment type="cofactor">
    <cofactor evidence="1">
        <name>Zn(2+)</name>
        <dbReference type="ChEBI" id="CHEBI:29105"/>
    </cofactor>
    <text evidence="1">Binds 1 zinc ion per subunit.</text>
</comment>
<comment type="pathway">
    <text evidence="1">Lipid metabolism; malonyl-CoA biosynthesis; malonyl-CoA from acetyl-CoA: step 1/1.</text>
</comment>
<comment type="subunit">
    <text evidence="1">Acetyl-CoA carboxylase is a heterohexamer composed of biotin carboxyl carrier protein (AccB), biotin carboxylase (AccC) and two subunits each of ACCase subunit alpha (AccA) and ACCase subunit beta (AccD).</text>
</comment>
<comment type="subcellular location">
    <subcellularLocation>
        <location evidence="1">Cytoplasm</location>
    </subcellularLocation>
</comment>
<comment type="similarity">
    <text evidence="1">Belongs to the AccD/PCCB family.</text>
</comment>
<feature type="chain" id="PRO_0000389886" description="Acetyl-coenzyme A carboxylase carboxyl transferase subunit beta">
    <location>
        <begin position="1"/>
        <end position="288"/>
    </location>
</feature>
<feature type="domain" description="CoA carboxyltransferase N-terminal" evidence="2">
    <location>
        <begin position="34"/>
        <end position="288"/>
    </location>
</feature>
<feature type="zinc finger region" description="C4-type" evidence="1">
    <location>
        <begin position="38"/>
        <end position="59"/>
    </location>
</feature>
<feature type="binding site" evidence="1">
    <location>
        <position position="38"/>
    </location>
    <ligand>
        <name>Zn(2+)</name>
        <dbReference type="ChEBI" id="CHEBI:29105"/>
    </ligand>
</feature>
<feature type="binding site" evidence="1">
    <location>
        <position position="41"/>
    </location>
    <ligand>
        <name>Zn(2+)</name>
        <dbReference type="ChEBI" id="CHEBI:29105"/>
    </ligand>
</feature>
<feature type="binding site" evidence="1">
    <location>
        <position position="56"/>
    </location>
    <ligand>
        <name>Zn(2+)</name>
        <dbReference type="ChEBI" id="CHEBI:29105"/>
    </ligand>
</feature>
<feature type="binding site" evidence="1">
    <location>
        <position position="59"/>
    </location>
    <ligand>
        <name>Zn(2+)</name>
        <dbReference type="ChEBI" id="CHEBI:29105"/>
    </ligand>
</feature>
<keyword id="KW-0067">ATP-binding</keyword>
<keyword id="KW-0963">Cytoplasm</keyword>
<keyword id="KW-0275">Fatty acid biosynthesis</keyword>
<keyword id="KW-0276">Fatty acid metabolism</keyword>
<keyword id="KW-0444">Lipid biosynthesis</keyword>
<keyword id="KW-0443">Lipid metabolism</keyword>
<keyword id="KW-0479">Metal-binding</keyword>
<keyword id="KW-0547">Nucleotide-binding</keyword>
<keyword id="KW-1185">Reference proteome</keyword>
<keyword id="KW-0808">Transferase</keyword>
<keyword id="KW-0862">Zinc</keyword>
<keyword id="KW-0863">Zinc-finger</keyword>